<evidence type="ECO:0000250" key="1"/>
<evidence type="ECO:0000255" key="2">
    <source>
        <dbReference type="PROSITE-ProRule" id="PRU10011"/>
    </source>
</evidence>
<evidence type="ECO:0000305" key="3"/>
<proteinExistence type="inferred from homology"/>
<keyword id="KW-0521">NADP</keyword>
<keyword id="KW-0560">Oxidoreductase</keyword>
<keyword id="KW-1185">Reference proteome</keyword>
<comment type="function">
    <text evidence="1">Catalyzes the reversible oxidative deamination of glutamate to alpha-ketoglutarate and ammonia.</text>
</comment>
<comment type="catalytic activity">
    <reaction>
        <text>L-glutamate + NADP(+) + H2O = 2-oxoglutarate + NH4(+) + NADPH + H(+)</text>
        <dbReference type="Rhea" id="RHEA:11612"/>
        <dbReference type="ChEBI" id="CHEBI:15377"/>
        <dbReference type="ChEBI" id="CHEBI:15378"/>
        <dbReference type="ChEBI" id="CHEBI:16810"/>
        <dbReference type="ChEBI" id="CHEBI:28938"/>
        <dbReference type="ChEBI" id="CHEBI:29985"/>
        <dbReference type="ChEBI" id="CHEBI:57783"/>
        <dbReference type="ChEBI" id="CHEBI:58349"/>
        <dbReference type="EC" id="1.4.1.4"/>
    </reaction>
</comment>
<comment type="subunit">
    <text evidence="1">Homohexamer.</text>
</comment>
<comment type="similarity">
    <text evidence="3">Belongs to the Glu/Leu/Phe/Val dehydrogenases family.</text>
</comment>
<dbReference type="EC" id="1.4.1.4"/>
<dbReference type="EMBL" id="X77454">
    <property type="protein sequence ID" value="CAA54601.1"/>
    <property type="molecule type" value="Genomic_DNA"/>
</dbReference>
<dbReference type="EMBL" id="BA000022">
    <property type="protein sequence ID" value="BAA10756.1"/>
    <property type="molecule type" value="Genomic_DNA"/>
</dbReference>
<dbReference type="PIR" id="S77064">
    <property type="entry name" value="S77064"/>
</dbReference>
<dbReference type="SMR" id="P54386"/>
<dbReference type="FunCoup" id="P54386">
    <property type="interactions" value="324"/>
</dbReference>
<dbReference type="STRING" id="1148.gene:10500260"/>
<dbReference type="PaxDb" id="1148-1006603"/>
<dbReference type="EnsemblBacteria" id="BAA10756">
    <property type="protein sequence ID" value="BAA10756"/>
    <property type="gene ID" value="BAA10756"/>
</dbReference>
<dbReference type="KEGG" id="syn:slr0710"/>
<dbReference type="eggNOG" id="COG0334">
    <property type="taxonomic scope" value="Bacteria"/>
</dbReference>
<dbReference type="InParanoid" id="P54386"/>
<dbReference type="PhylomeDB" id="P54386"/>
<dbReference type="Proteomes" id="UP000001425">
    <property type="component" value="Chromosome"/>
</dbReference>
<dbReference type="GO" id="GO:0005737">
    <property type="term" value="C:cytoplasm"/>
    <property type="evidence" value="ECO:0000250"/>
    <property type="project" value="UniProtKB"/>
</dbReference>
<dbReference type="GO" id="GO:0005829">
    <property type="term" value="C:cytosol"/>
    <property type="evidence" value="ECO:0000318"/>
    <property type="project" value="GO_Central"/>
</dbReference>
<dbReference type="GO" id="GO:0004354">
    <property type="term" value="F:glutamate dehydrogenase (NADP+) activity"/>
    <property type="evidence" value="ECO:0000250"/>
    <property type="project" value="UniProtKB"/>
</dbReference>
<dbReference type="GO" id="GO:0006537">
    <property type="term" value="P:glutamate biosynthetic process"/>
    <property type="evidence" value="ECO:0000250"/>
    <property type="project" value="UniProtKB"/>
</dbReference>
<dbReference type="CDD" id="cd01076">
    <property type="entry name" value="NAD_bind_1_Glu_DH"/>
    <property type="match status" value="1"/>
</dbReference>
<dbReference type="FunFam" id="3.40.50.10860:FF:000003">
    <property type="entry name" value="Glutamate dehydrogenase"/>
    <property type="match status" value="1"/>
</dbReference>
<dbReference type="Gene3D" id="3.40.50.10860">
    <property type="entry name" value="Leucine Dehydrogenase, chain A, domain 1"/>
    <property type="match status" value="1"/>
</dbReference>
<dbReference type="Gene3D" id="3.40.50.720">
    <property type="entry name" value="NAD(P)-binding Rossmann-like Domain"/>
    <property type="match status" value="1"/>
</dbReference>
<dbReference type="InterPro" id="IPR046346">
    <property type="entry name" value="Aminoacid_DH-like_N_sf"/>
</dbReference>
<dbReference type="InterPro" id="IPR006095">
    <property type="entry name" value="Glu/Leu/Phe/Val/Trp_DH"/>
</dbReference>
<dbReference type="InterPro" id="IPR006096">
    <property type="entry name" value="Glu/Leu/Phe/Val/Trp_DH_C"/>
</dbReference>
<dbReference type="InterPro" id="IPR006097">
    <property type="entry name" value="Glu/Leu/Phe/Val/Trp_DH_dimer"/>
</dbReference>
<dbReference type="InterPro" id="IPR033524">
    <property type="entry name" value="Glu/Leu/Phe/Val_DH_AS"/>
</dbReference>
<dbReference type="InterPro" id="IPR014362">
    <property type="entry name" value="Glu_DH"/>
</dbReference>
<dbReference type="InterPro" id="IPR036291">
    <property type="entry name" value="NAD(P)-bd_dom_sf"/>
</dbReference>
<dbReference type="InterPro" id="IPR033922">
    <property type="entry name" value="NAD_bind_Glu_DH"/>
</dbReference>
<dbReference type="PANTHER" id="PTHR11606">
    <property type="entry name" value="GLUTAMATE DEHYDROGENASE"/>
    <property type="match status" value="1"/>
</dbReference>
<dbReference type="PANTHER" id="PTHR11606:SF13">
    <property type="entry name" value="GLUTAMATE DEHYDROGENASE 1, MITOCHONDRIAL"/>
    <property type="match status" value="1"/>
</dbReference>
<dbReference type="Pfam" id="PF00208">
    <property type="entry name" value="ELFV_dehydrog"/>
    <property type="match status" value="1"/>
</dbReference>
<dbReference type="Pfam" id="PF02812">
    <property type="entry name" value="ELFV_dehydrog_N"/>
    <property type="match status" value="1"/>
</dbReference>
<dbReference type="PIRSF" id="PIRSF000185">
    <property type="entry name" value="Glu_DH"/>
    <property type="match status" value="1"/>
</dbReference>
<dbReference type="PRINTS" id="PR00082">
    <property type="entry name" value="GLFDHDRGNASE"/>
</dbReference>
<dbReference type="SMART" id="SM00839">
    <property type="entry name" value="ELFV_dehydrog"/>
    <property type="match status" value="1"/>
</dbReference>
<dbReference type="SUPFAM" id="SSF53223">
    <property type="entry name" value="Aminoacid dehydrogenase-like, N-terminal domain"/>
    <property type="match status" value="1"/>
</dbReference>
<dbReference type="SUPFAM" id="SSF51735">
    <property type="entry name" value="NAD(P)-binding Rossmann-fold domains"/>
    <property type="match status" value="1"/>
</dbReference>
<dbReference type="PROSITE" id="PS00074">
    <property type="entry name" value="GLFV_DEHYDROGENASE"/>
    <property type="match status" value="1"/>
</dbReference>
<reference key="1">
    <citation type="journal article" date="1995" name="Plant Mol. Biol.">
        <title>The NADP-glutamate dehydrogenase of the cyanobacterium Synechocystis 6803: cloning, transcriptional analysis and disruption of the gdhA gene.</title>
        <authorList>
            <person name="Chavez S."/>
            <person name="Reyes J.C."/>
            <person name="Chauvat F."/>
            <person name="Florencio F.J."/>
            <person name="Candau P."/>
        </authorList>
    </citation>
    <scope>NUCLEOTIDE SEQUENCE [GENOMIC DNA]</scope>
</reference>
<reference key="2">
    <citation type="journal article" date="1995" name="DNA Res.">
        <title>Sequence analysis of the genome of the unicellular cyanobacterium Synechocystis sp. strain PCC6803. I. Sequence features in the 1 Mb region from map positions 64% to 92% of the genome.</title>
        <authorList>
            <person name="Kaneko T."/>
            <person name="Tanaka A."/>
            <person name="Sato S."/>
            <person name="Kotani H."/>
            <person name="Sazuka T."/>
            <person name="Miyajima N."/>
            <person name="Sugiura M."/>
            <person name="Tabata S."/>
        </authorList>
    </citation>
    <scope>NUCLEOTIDE SEQUENCE [LARGE SCALE GENOMIC DNA]</scope>
    <source>
        <strain>ATCC 27184 / PCC 6803 / N-1</strain>
    </source>
</reference>
<reference key="3">
    <citation type="journal article" date="1996" name="DNA Res.">
        <title>Sequence analysis of the genome of the unicellular cyanobacterium Synechocystis sp. strain PCC6803. II. Sequence determination of the entire genome and assignment of potential protein-coding regions.</title>
        <authorList>
            <person name="Kaneko T."/>
            <person name="Sato S."/>
            <person name="Kotani H."/>
            <person name="Tanaka A."/>
            <person name="Asamizu E."/>
            <person name="Nakamura Y."/>
            <person name="Miyajima N."/>
            <person name="Hirosawa M."/>
            <person name="Sugiura M."/>
            <person name="Sasamoto S."/>
            <person name="Kimura T."/>
            <person name="Hosouchi T."/>
            <person name="Matsuno A."/>
            <person name="Muraki A."/>
            <person name="Nakazaki N."/>
            <person name="Naruo K."/>
            <person name="Okumura S."/>
            <person name="Shimpo S."/>
            <person name="Takeuchi C."/>
            <person name="Wada T."/>
            <person name="Watanabe A."/>
            <person name="Yamada M."/>
            <person name="Yasuda M."/>
            <person name="Tabata S."/>
        </authorList>
    </citation>
    <scope>NUCLEOTIDE SEQUENCE [LARGE SCALE GENOMIC DNA]</scope>
    <source>
        <strain>ATCC 27184 / PCC 6803 / Kazusa</strain>
    </source>
</reference>
<protein>
    <recommendedName>
        <fullName>NADP-specific glutamate dehydrogenase</fullName>
        <shortName>NADP-GDH</shortName>
        <ecNumber>1.4.1.4</ecNumber>
    </recommendedName>
</protein>
<sequence>MAGSLFADASKRLEKALKYVAISDDAGERLKYPKTSLSVSIPVRMDDGSLKIFPGYRVRYDDTRGPGKGGVRYHPNVTMDEVQSLAFWMTFKCALLNLPFGGAKGGITLNPKELSRAELERLSRGYIEAIADFIGPDIDILAPDVYTNEMMMGWMMDQYSIIRRKISPAVVTGKPVTMGGSQGRNTATGTGAFYIMQGMLPKFDQYPENTTVAVQGFGNAGMVVAECLYQDGYKVVAISDSQGGIYNEQGIDIPAVIDYKQRHRTLAGMYCDQAICDLGENQQISNAELLALDVDVLIPAALENQITRDNADQVRARYIFEVANGPTTTAADDILASKGIYVFPDILVNAGGVTVSYFEWVQNRSGLYWSAKEVNDRLKEKMVEEAEHVWNITQELDVNVRTAAYIHALNRLSEAMDAKGTRDYYQDS</sequence>
<name>DHE4_SYNY3</name>
<organism>
    <name type="scientific">Synechocystis sp. (strain ATCC 27184 / PCC 6803 / Kazusa)</name>
    <dbReference type="NCBI Taxonomy" id="1111708"/>
    <lineage>
        <taxon>Bacteria</taxon>
        <taxon>Bacillati</taxon>
        <taxon>Cyanobacteriota</taxon>
        <taxon>Cyanophyceae</taxon>
        <taxon>Synechococcales</taxon>
        <taxon>Merismopediaceae</taxon>
        <taxon>Synechocystis</taxon>
    </lineage>
</organism>
<feature type="chain" id="PRO_0000182777" description="NADP-specific glutamate dehydrogenase">
    <location>
        <begin position="1"/>
        <end position="428"/>
    </location>
</feature>
<feature type="active site" description="Proton donor" evidence="2">
    <location>
        <position position="104"/>
    </location>
</feature>
<feature type="binding site" evidence="1">
    <location>
        <position position="68"/>
    </location>
    <ligand>
        <name>substrate</name>
    </ligand>
</feature>
<feature type="binding site" evidence="1">
    <location>
        <position position="92"/>
    </location>
    <ligand>
        <name>substrate</name>
    </ligand>
</feature>
<feature type="binding site" evidence="1">
    <location>
        <position position="188"/>
    </location>
    <ligand>
        <name>NADP(+)</name>
        <dbReference type="ChEBI" id="CHEBI:58349"/>
    </ligand>
</feature>
<feature type="binding site" evidence="1">
    <location>
        <position position="219"/>
    </location>
    <ligand>
        <name>NADP(+)</name>
        <dbReference type="ChEBI" id="CHEBI:58349"/>
    </ligand>
</feature>
<feature type="binding site" evidence="1">
    <location>
        <position position="356"/>
    </location>
    <ligand>
        <name>substrate</name>
    </ligand>
</feature>
<feature type="site" description="Important for catalysis" evidence="1">
    <location>
        <position position="144"/>
    </location>
</feature>
<accession>P54386</accession>
<gene>
    <name type="primary">gdhA</name>
    <name type="ordered locus">slr0710</name>
</gene>